<dbReference type="EC" id="6.1.1.4" evidence="1"/>
<dbReference type="EMBL" id="CP000407">
    <property type="protein sequence ID" value="ABP91047.1"/>
    <property type="status" value="ALT_INIT"/>
    <property type="molecule type" value="Genomic_DNA"/>
</dbReference>
<dbReference type="SMR" id="A4VY58"/>
<dbReference type="STRING" id="391295.SSU05_2081"/>
<dbReference type="KEGG" id="ssu:SSU05_2081"/>
<dbReference type="eggNOG" id="COG0495">
    <property type="taxonomic scope" value="Bacteria"/>
</dbReference>
<dbReference type="HOGENOM" id="CLU_004427_0_0_9"/>
<dbReference type="GO" id="GO:0005829">
    <property type="term" value="C:cytosol"/>
    <property type="evidence" value="ECO:0007669"/>
    <property type="project" value="TreeGrafter"/>
</dbReference>
<dbReference type="GO" id="GO:0002161">
    <property type="term" value="F:aminoacyl-tRNA deacylase activity"/>
    <property type="evidence" value="ECO:0007669"/>
    <property type="project" value="InterPro"/>
</dbReference>
<dbReference type="GO" id="GO:0005524">
    <property type="term" value="F:ATP binding"/>
    <property type="evidence" value="ECO:0007669"/>
    <property type="project" value="UniProtKB-UniRule"/>
</dbReference>
<dbReference type="GO" id="GO:0004823">
    <property type="term" value="F:leucine-tRNA ligase activity"/>
    <property type="evidence" value="ECO:0007669"/>
    <property type="project" value="UniProtKB-UniRule"/>
</dbReference>
<dbReference type="GO" id="GO:0006429">
    <property type="term" value="P:leucyl-tRNA aminoacylation"/>
    <property type="evidence" value="ECO:0007669"/>
    <property type="project" value="UniProtKB-UniRule"/>
</dbReference>
<dbReference type="CDD" id="cd07958">
    <property type="entry name" value="Anticodon_Ia_Leu_BEm"/>
    <property type="match status" value="1"/>
</dbReference>
<dbReference type="CDD" id="cd00812">
    <property type="entry name" value="LeuRS_core"/>
    <property type="match status" value="1"/>
</dbReference>
<dbReference type="FunFam" id="1.10.730.10:FF:000012">
    <property type="entry name" value="Leucine--tRNA ligase"/>
    <property type="match status" value="1"/>
</dbReference>
<dbReference type="FunFam" id="3.40.50.620:FF:000056">
    <property type="entry name" value="Leucine--tRNA ligase"/>
    <property type="match status" value="1"/>
</dbReference>
<dbReference type="FunFam" id="3.40.50.620:FF:000077">
    <property type="entry name" value="Leucine--tRNA ligase"/>
    <property type="match status" value="1"/>
</dbReference>
<dbReference type="FunFam" id="1.10.730.10:FF:000011">
    <property type="entry name" value="Leucine--tRNA ligase chloroplastic/mitochondrial"/>
    <property type="match status" value="1"/>
</dbReference>
<dbReference type="Gene3D" id="3.40.50.620">
    <property type="entry name" value="HUPs"/>
    <property type="match status" value="2"/>
</dbReference>
<dbReference type="Gene3D" id="1.10.730.10">
    <property type="entry name" value="Isoleucyl-tRNA Synthetase, Domain 1"/>
    <property type="match status" value="1"/>
</dbReference>
<dbReference type="Gene3D" id="3.90.740.10">
    <property type="entry name" value="Valyl/Leucyl/Isoleucyl-tRNA synthetase, editing domain"/>
    <property type="match status" value="1"/>
</dbReference>
<dbReference type="HAMAP" id="MF_00049_B">
    <property type="entry name" value="Leu_tRNA_synth_B"/>
    <property type="match status" value="1"/>
</dbReference>
<dbReference type="InterPro" id="IPR001412">
    <property type="entry name" value="aa-tRNA-synth_I_CS"/>
</dbReference>
<dbReference type="InterPro" id="IPR002300">
    <property type="entry name" value="aa-tRNA-synth_Ia"/>
</dbReference>
<dbReference type="InterPro" id="IPR002302">
    <property type="entry name" value="Leu-tRNA-ligase"/>
</dbReference>
<dbReference type="InterPro" id="IPR025709">
    <property type="entry name" value="Leu_tRNA-synth_edit"/>
</dbReference>
<dbReference type="InterPro" id="IPR013155">
    <property type="entry name" value="M/V/L/I-tRNA-synth_anticd-bd"/>
</dbReference>
<dbReference type="InterPro" id="IPR015413">
    <property type="entry name" value="Methionyl/Leucyl_tRNA_Synth"/>
</dbReference>
<dbReference type="InterPro" id="IPR014729">
    <property type="entry name" value="Rossmann-like_a/b/a_fold"/>
</dbReference>
<dbReference type="InterPro" id="IPR009080">
    <property type="entry name" value="tRNAsynth_Ia_anticodon-bd"/>
</dbReference>
<dbReference type="InterPro" id="IPR009008">
    <property type="entry name" value="Val/Leu/Ile-tRNA-synth_edit"/>
</dbReference>
<dbReference type="NCBIfam" id="TIGR00396">
    <property type="entry name" value="leuS_bact"/>
    <property type="match status" value="1"/>
</dbReference>
<dbReference type="PANTHER" id="PTHR43740:SF2">
    <property type="entry name" value="LEUCINE--TRNA LIGASE, MITOCHONDRIAL"/>
    <property type="match status" value="1"/>
</dbReference>
<dbReference type="PANTHER" id="PTHR43740">
    <property type="entry name" value="LEUCYL-TRNA SYNTHETASE"/>
    <property type="match status" value="1"/>
</dbReference>
<dbReference type="Pfam" id="PF08264">
    <property type="entry name" value="Anticodon_1"/>
    <property type="match status" value="1"/>
</dbReference>
<dbReference type="Pfam" id="PF00133">
    <property type="entry name" value="tRNA-synt_1"/>
    <property type="match status" value="2"/>
</dbReference>
<dbReference type="Pfam" id="PF13603">
    <property type="entry name" value="tRNA-synt_1_2"/>
    <property type="match status" value="1"/>
</dbReference>
<dbReference type="Pfam" id="PF09334">
    <property type="entry name" value="tRNA-synt_1g"/>
    <property type="match status" value="1"/>
</dbReference>
<dbReference type="PRINTS" id="PR00985">
    <property type="entry name" value="TRNASYNTHLEU"/>
</dbReference>
<dbReference type="SUPFAM" id="SSF47323">
    <property type="entry name" value="Anticodon-binding domain of a subclass of class I aminoacyl-tRNA synthetases"/>
    <property type="match status" value="1"/>
</dbReference>
<dbReference type="SUPFAM" id="SSF52374">
    <property type="entry name" value="Nucleotidylyl transferase"/>
    <property type="match status" value="1"/>
</dbReference>
<dbReference type="SUPFAM" id="SSF50677">
    <property type="entry name" value="ValRS/IleRS/LeuRS editing domain"/>
    <property type="match status" value="1"/>
</dbReference>
<dbReference type="PROSITE" id="PS00178">
    <property type="entry name" value="AA_TRNA_LIGASE_I"/>
    <property type="match status" value="1"/>
</dbReference>
<accession>A4VY58</accession>
<evidence type="ECO:0000255" key="1">
    <source>
        <dbReference type="HAMAP-Rule" id="MF_00049"/>
    </source>
</evidence>
<evidence type="ECO:0000305" key="2"/>
<gene>
    <name evidence="1" type="primary">leuS</name>
    <name type="ordered locus">SSU05_2081</name>
</gene>
<feature type="chain" id="PRO_0000334826" description="Leucine--tRNA ligase">
    <location>
        <begin position="1"/>
        <end position="833"/>
    </location>
</feature>
<feature type="short sequence motif" description="'HIGH' region">
    <location>
        <begin position="41"/>
        <end position="52"/>
    </location>
</feature>
<feature type="short sequence motif" description="'KMSKS' region">
    <location>
        <begin position="610"/>
        <end position="614"/>
    </location>
</feature>
<feature type="binding site" evidence="1">
    <location>
        <position position="613"/>
    </location>
    <ligand>
        <name>ATP</name>
        <dbReference type="ChEBI" id="CHEBI:30616"/>
    </ligand>
</feature>
<proteinExistence type="inferred from homology"/>
<comment type="catalytic activity">
    <reaction evidence="1">
        <text>tRNA(Leu) + L-leucine + ATP = L-leucyl-tRNA(Leu) + AMP + diphosphate</text>
        <dbReference type="Rhea" id="RHEA:11688"/>
        <dbReference type="Rhea" id="RHEA-COMP:9613"/>
        <dbReference type="Rhea" id="RHEA-COMP:9622"/>
        <dbReference type="ChEBI" id="CHEBI:30616"/>
        <dbReference type="ChEBI" id="CHEBI:33019"/>
        <dbReference type="ChEBI" id="CHEBI:57427"/>
        <dbReference type="ChEBI" id="CHEBI:78442"/>
        <dbReference type="ChEBI" id="CHEBI:78494"/>
        <dbReference type="ChEBI" id="CHEBI:456215"/>
        <dbReference type="EC" id="6.1.1.4"/>
    </reaction>
</comment>
<comment type="subcellular location">
    <subcellularLocation>
        <location evidence="1">Cytoplasm</location>
    </subcellularLocation>
</comment>
<comment type="similarity">
    <text evidence="1">Belongs to the class-I aminoacyl-tRNA synthetase family.</text>
</comment>
<comment type="sequence caution" evidence="2">
    <conflict type="erroneous initiation">
        <sequence resource="EMBL-CDS" id="ABP91047"/>
    </conflict>
</comment>
<reference key="1">
    <citation type="journal article" date="2007" name="PLoS ONE">
        <title>A glimpse of streptococcal toxic shock syndrome from comparative genomics of S. suis 2 Chinese isolates.</title>
        <authorList>
            <person name="Chen C."/>
            <person name="Tang J."/>
            <person name="Dong W."/>
            <person name="Wang C."/>
            <person name="Feng Y."/>
            <person name="Wang J."/>
            <person name="Zheng F."/>
            <person name="Pan X."/>
            <person name="Liu D."/>
            <person name="Li M."/>
            <person name="Song Y."/>
            <person name="Zhu X."/>
            <person name="Sun H."/>
            <person name="Feng T."/>
            <person name="Guo Z."/>
            <person name="Ju A."/>
            <person name="Ge J."/>
            <person name="Dong Y."/>
            <person name="Sun W."/>
            <person name="Jiang Y."/>
            <person name="Wang J."/>
            <person name="Yan J."/>
            <person name="Yang H."/>
            <person name="Wang X."/>
            <person name="Gao G.F."/>
            <person name="Yang R."/>
            <person name="Wang J."/>
            <person name="Yu J."/>
        </authorList>
    </citation>
    <scope>NUCLEOTIDE SEQUENCE [LARGE SCALE GENOMIC DNA]</scope>
    <source>
        <strain>05ZYH33</strain>
    </source>
</reference>
<keyword id="KW-0030">Aminoacyl-tRNA synthetase</keyword>
<keyword id="KW-0067">ATP-binding</keyword>
<keyword id="KW-0963">Cytoplasm</keyword>
<keyword id="KW-0436">Ligase</keyword>
<keyword id="KW-0547">Nucleotide-binding</keyword>
<keyword id="KW-0648">Protein biosynthesis</keyword>
<organism>
    <name type="scientific">Streptococcus suis (strain 05ZYH33)</name>
    <dbReference type="NCBI Taxonomy" id="391295"/>
    <lineage>
        <taxon>Bacteria</taxon>
        <taxon>Bacillati</taxon>
        <taxon>Bacillota</taxon>
        <taxon>Bacilli</taxon>
        <taxon>Lactobacillales</taxon>
        <taxon>Streptococcaceae</taxon>
        <taxon>Streptococcus</taxon>
    </lineage>
</organism>
<name>SYL_STRSY</name>
<protein>
    <recommendedName>
        <fullName evidence="1">Leucine--tRNA ligase</fullName>
        <ecNumber evidence="1">6.1.1.4</ecNumber>
    </recommendedName>
    <alternativeName>
        <fullName evidence="1">Leucyl-tRNA synthetase</fullName>
        <shortName evidence="1">LeuRS</shortName>
    </alternativeName>
</protein>
<sequence>MSFYNHKEIEPKWQEFWAKNHTFKTGTDAEKPNFYALDMFPYPSGAGLHVGHPEGYTATDILSRYKRAQGYNVLHPMGWDAFGLPAEQYAMDTGNDPADFTAENIANFKRQINALGFSYDWDREVNTTDPNYYKWTQWIFTKLYEKGLAYEAEVPVNWVEELGTAIANEEVLPDGTSERGGYPVVRKPMRQWMLKITAYAERLLNDLEEVDWPESIKDMQRNWIGKSTGANVTFKIKDTDKDFTVFTTRPDTLFGATYAVLAPEHDLVDSITSAEQAEAVAEYKRQASLKSDLARTDLATDKTGVWTGAYAINPVNGKEIPIWIADYVLASYGTGAIMAVPAHDERDWEFAKQFGLDIIPVLEGGNVEEAPYTEDGAHINSDFLDGLNKEEAIAKMVAWLEENGVGQEKISYRLRDWLFSRQRYWGEPIPIIHWEDGTSTAVPENELPLVLPKTSDIKPSGTGESPLANLTDWLEVVREDGVKGRRETNTMPQWAGSSWYYLRYIDPHNDEKLADEDLLKAWLPVDIYIGGAEHAVLHLLYARFWHKFLYDLGVVPTKEPFQKLFNQGMILGTSYRDSRGALVATDKVEKRDGSFFHMETGEELEQAPAKMSKSLKNVVNPDDVVEQFGADTLRVYEMFMGPLDASIAWSEEGLEGSRKFLDRVYRLLTTKELVAENSGALDKVYNETVKTVTEHIEDLKFNTAIAQLMIFVNAANKEDKLYVDYAKGFVQLIAPFAPHLAEELWQGLANTGQSISYVAWPTYDESKLVESEVEIVVQIKGKVKARLTVAKDLAPAELEKVALADEKVQAEIAGQTVVKVISVPNKLVNIVVK</sequence>